<comment type="miscellaneous">
    <text>On the 2D-gel the determined pI of this unknown protein is: 5.9, its MW is: 34.6 kDa.</text>
</comment>
<sequence length="15" mass="1564">AYGGDGGAYYEWSPA</sequence>
<feature type="chain" id="PRO_0000055510" description="Unknown protein from spot 258 of 2D-PAGE of etiolated coleoptile">
    <location>
        <begin position="1" status="less than"/>
        <end position="15" status="greater than"/>
    </location>
</feature>
<feature type="non-terminal residue">
    <location>
        <position position="1"/>
    </location>
</feature>
<feature type="non-terminal residue">
    <location>
        <position position="15"/>
    </location>
</feature>
<keyword id="KW-0903">Direct protein sequencing</keyword>
<keyword id="KW-1185">Reference proteome</keyword>
<protein>
    <recommendedName>
        <fullName>Unknown protein from spot 258 of 2D-PAGE of etiolated coleoptile</fullName>
    </recommendedName>
</protein>
<reference key="1">
    <citation type="journal article" date="1996" name="Theor. Appl. Genet.">
        <title>The maize two dimensional gel protein database: towards an integrated genome analysis program.</title>
        <authorList>
            <person name="Touzet P."/>
            <person name="Riccardi F."/>
            <person name="Morin C."/>
            <person name="Damerval C."/>
            <person name="Huet J.-C."/>
            <person name="Pernollet J.-C."/>
            <person name="Zivy M."/>
            <person name="de Vienne D."/>
        </authorList>
        <dbReference type="AGRICOLA" id="IND20551642"/>
    </citation>
    <scope>PROTEIN SEQUENCE</scope>
    <source>
        <tissue>Coleoptile</tissue>
    </source>
</reference>
<proteinExistence type="evidence at protein level"/>
<name>UC14_MAIZE</name>
<organism>
    <name type="scientific">Zea mays</name>
    <name type="common">Maize</name>
    <dbReference type="NCBI Taxonomy" id="4577"/>
    <lineage>
        <taxon>Eukaryota</taxon>
        <taxon>Viridiplantae</taxon>
        <taxon>Streptophyta</taxon>
        <taxon>Embryophyta</taxon>
        <taxon>Tracheophyta</taxon>
        <taxon>Spermatophyta</taxon>
        <taxon>Magnoliopsida</taxon>
        <taxon>Liliopsida</taxon>
        <taxon>Poales</taxon>
        <taxon>Poaceae</taxon>
        <taxon>PACMAD clade</taxon>
        <taxon>Panicoideae</taxon>
        <taxon>Andropogonodae</taxon>
        <taxon>Andropogoneae</taxon>
        <taxon>Tripsacinae</taxon>
        <taxon>Zea</taxon>
    </lineage>
</organism>
<dbReference type="MaizeGDB" id="123944"/>
<dbReference type="InParanoid" id="P80620"/>
<dbReference type="Proteomes" id="UP000007305">
    <property type="component" value="Unplaced"/>
</dbReference>
<accession>P80620</accession>